<sequence>MNNHFKCIGIVGHPRHPTALTTHEMLYRWLCKKGYEVIVEQQIAHELQLKNVKTGTLAEIGQLADLAVVVGGDGNMLGAARTLARYDIKVIGINRGNLGFLTDLDPDNAQQQLADVLEGHYISEKRFLLEAQVCQQDCQKRISTAINEVVLHPGKVAHMIEFEVYIDEIFAFSQRSDGLIISTPTGSTAYSLSAGGPILTPSLDAITLVPMFPHTLSARPLVINSSSTIRLRFSHRRNDLEISCDSQIALPIQEGEDVLIRRCDYHLNLIHPKDYSYFNTLSTKLGWSKKLF</sequence>
<comment type="function">
    <text evidence="1">Involved in the regulation of the intracellular balance of NAD and NADP, and is a key enzyme in the biosynthesis of NADP. Catalyzes specifically the phosphorylation on 2'-hydroxyl of the adenosine moiety of NAD to yield NADP.</text>
</comment>
<comment type="catalytic activity">
    <reaction evidence="1">
        <text>NAD(+) + ATP = ADP + NADP(+) + H(+)</text>
        <dbReference type="Rhea" id="RHEA:18629"/>
        <dbReference type="ChEBI" id="CHEBI:15378"/>
        <dbReference type="ChEBI" id="CHEBI:30616"/>
        <dbReference type="ChEBI" id="CHEBI:57540"/>
        <dbReference type="ChEBI" id="CHEBI:58349"/>
        <dbReference type="ChEBI" id="CHEBI:456216"/>
        <dbReference type="EC" id="2.7.1.23"/>
    </reaction>
</comment>
<comment type="cofactor">
    <cofactor evidence="1">
        <name>a divalent metal cation</name>
        <dbReference type="ChEBI" id="CHEBI:60240"/>
    </cofactor>
</comment>
<comment type="subcellular location">
    <subcellularLocation>
        <location evidence="1">Cytoplasm</location>
    </subcellularLocation>
</comment>
<comment type="similarity">
    <text evidence="1">Belongs to the NAD kinase family.</text>
</comment>
<keyword id="KW-0067">ATP-binding</keyword>
<keyword id="KW-0963">Cytoplasm</keyword>
<keyword id="KW-0418">Kinase</keyword>
<keyword id="KW-0520">NAD</keyword>
<keyword id="KW-0521">NADP</keyword>
<keyword id="KW-0547">Nucleotide-binding</keyword>
<keyword id="KW-0808">Transferase</keyword>
<evidence type="ECO:0000255" key="1">
    <source>
        <dbReference type="HAMAP-Rule" id="MF_00361"/>
    </source>
</evidence>
<feature type="chain" id="PRO_0000229687" description="NAD kinase">
    <location>
        <begin position="1"/>
        <end position="292"/>
    </location>
</feature>
<feature type="active site" description="Proton acceptor" evidence="1">
    <location>
        <position position="73"/>
    </location>
</feature>
<feature type="binding site" evidence="1">
    <location>
        <begin position="73"/>
        <end position="74"/>
    </location>
    <ligand>
        <name>NAD(+)</name>
        <dbReference type="ChEBI" id="CHEBI:57540"/>
    </ligand>
</feature>
<feature type="binding site" evidence="1">
    <location>
        <begin position="147"/>
        <end position="148"/>
    </location>
    <ligand>
        <name>NAD(+)</name>
        <dbReference type="ChEBI" id="CHEBI:57540"/>
    </ligand>
</feature>
<feature type="binding site" evidence="1">
    <location>
        <position position="158"/>
    </location>
    <ligand>
        <name>NAD(+)</name>
        <dbReference type="ChEBI" id="CHEBI:57540"/>
    </ligand>
</feature>
<feature type="binding site" evidence="1">
    <location>
        <position position="175"/>
    </location>
    <ligand>
        <name>NAD(+)</name>
        <dbReference type="ChEBI" id="CHEBI:57540"/>
    </ligand>
</feature>
<feature type="binding site" evidence="1">
    <location>
        <position position="177"/>
    </location>
    <ligand>
        <name>NAD(+)</name>
        <dbReference type="ChEBI" id="CHEBI:57540"/>
    </ligand>
</feature>
<feature type="binding site" evidence="1">
    <location>
        <begin position="188"/>
        <end position="193"/>
    </location>
    <ligand>
        <name>NAD(+)</name>
        <dbReference type="ChEBI" id="CHEBI:57540"/>
    </ligand>
</feature>
<feature type="binding site" evidence="1">
    <location>
        <position position="247"/>
    </location>
    <ligand>
        <name>NAD(+)</name>
        <dbReference type="ChEBI" id="CHEBI:57540"/>
    </ligand>
</feature>
<proteinExistence type="inferred from homology"/>
<gene>
    <name evidence="1" type="primary">nadK</name>
    <name type="ordered locus">SBO_2750</name>
</gene>
<organism>
    <name type="scientific">Shigella boydii serotype 4 (strain Sb227)</name>
    <dbReference type="NCBI Taxonomy" id="300268"/>
    <lineage>
        <taxon>Bacteria</taxon>
        <taxon>Pseudomonadati</taxon>
        <taxon>Pseudomonadota</taxon>
        <taxon>Gammaproteobacteria</taxon>
        <taxon>Enterobacterales</taxon>
        <taxon>Enterobacteriaceae</taxon>
        <taxon>Shigella</taxon>
    </lineage>
</organism>
<protein>
    <recommendedName>
        <fullName evidence="1">NAD kinase</fullName>
        <ecNumber evidence="1">2.7.1.23</ecNumber>
    </recommendedName>
    <alternativeName>
        <fullName evidence="1">ATP-dependent NAD kinase</fullName>
    </alternativeName>
</protein>
<dbReference type="EC" id="2.7.1.23" evidence="1"/>
<dbReference type="EMBL" id="CP000036">
    <property type="protein sequence ID" value="ABB67277.1"/>
    <property type="molecule type" value="Genomic_DNA"/>
</dbReference>
<dbReference type="RefSeq" id="WP_001059162.1">
    <property type="nucleotide sequence ID" value="NC_007613.1"/>
</dbReference>
<dbReference type="SMR" id="Q31XD1"/>
<dbReference type="KEGG" id="sbo:SBO_2750"/>
<dbReference type="HOGENOM" id="CLU_008831_0_1_6"/>
<dbReference type="Proteomes" id="UP000007067">
    <property type="component" value="Chromosome"/>
</dbReference>
<dbReference type="GO" id="GO:0005737">
    <property type="term" value="C:cytoplasm"/>
    <property type="evidence" value="ECO:0007669"/>
    <property type="project" value="UniProtKB-SubCell"/>
</dbReference>
<dbReference type="GO" id="GO:0005524">
    <property type="term" value="F:ATP binding"/>
    <property type="evidence" value="ECO:0007669"/>
    <property type="project" value="UniProtKB-KW"/>
</dbReference>
<dbReference type="GO" id="GO:0046872">
    <property type="term" value="F:metal ion binding"/>
    <property type="evidence" value="ECO:0007669"/>
    <property type="project" value="UniProtKB-UniRule"/>
</dbReference>
<dbReference type="GO" id="GO:0051287">
    <property type="term" value="F:NAD binding"/>
    <property type="evidence" value="ECO:0007669"/>
    <property type="project" value="UniProtKB-ARBA"/>
</dbReference>
<dbReference type="GO" id="GO:0003951">
    <property type="term" value="F:NAD+ kinase activity"/>
    <property type="evidence" value="ECO:0007669"/>
    <property type="project" value="UniProtKB-UniRule"/>
</dbReference>
<dbReference type="GO" id="GO:0019674">
    <property type="term" value="P:NAD metabolic process"/>
    <property type="evidence" value="ECO:0007669"/>
    <property type="project" value="InterPro"/>
</dbReference>
<dbReference type="GO" id="GO:0006741">
    <property type="term" value="P:NADP biosynthetic process"/>
    <property type="evidence" value="ECO:0007669"/>
    <property type="project" value="UniProtKB-UniRule"/>
</dbReference>
<dbReference type="FunFam" id="2.60.200.30:FF:000001">
    <property type="entry name" value="NAD kinase"/>
    <property type="match status" value="1"/>
</dbReference>
<dbReference type="FunFam" id="3.40.50.10330:FF:000004">
    <property type="entry name" value="NAD kinase"/>
    <property type="match status" value="1"/>
</dbReference>
<dbReference type="Gene3D" id="3.40.50.10330">
    <property type="entry name" value="Probable inorganic polyphosphate/atp-NAD kinase, domain 1"/>
    <property type="match status" value="1"/>
</dbReference>
<dbReference type="Gene3D" id="2.60.200.30">
    <property type="entry name" value="Probable inorganic polyphosphate/atp-NAD kinase, domain 2"/>
    <property type="match status" value="1"/>
</dbReference>
<dbReference type="HAMAP" id="MF_00361">
    <property type="entry name" value="NAD_kinase"/>
    <property type="match status" value="1"/>
</dbReference>
<dbReference type="InterPro" id="IPR017438">
    <property type="entry name" value="ATP-NAD_kinase_N"/>
</dbReference>
<dbReference type="InterPro" id="IPR017437">
    <property type="entry name" value="ATP-NAD_kinase_PpnK-typ_C"/>
</dbReference>
<dbReference type="InterPro" id="IPR016064">
    <property type="entry name" value="NAD/diacylglycerol_kinase_sf"/>
</dbReference>
<dbReference type="InterPro" id="IPR002504">
    <property type="entry name" value="NADK"/>
</dbReference>
<dbReference type="NCBIfam" id="NF002306">
    <property type="entry name" value="PRK01231.1"/>
    <property type="match status" value="1"/>
</dbReference>
<dbReference type="NCBIfam" id="NF002893">
    <property type="entry name" value="PRK03378.1"/>
    <property type="match status" value="1"/>
</dbReference>
<dbReference type="PANTHER" id="PTHR20275">
    <property type="entry name" value="NAD KINASE"/>
    <property type="match status" value="1"/>
</dbReference>
<dbReference type="PANTHER" id="PTHR20275:SF0">
    <property type="entry name" value="NAD KINASE"/>
    <property type="match status" value="1"/>
</dbReference>
<dbReference type="Pfam" id="PF01513">
    <property type="entry name" value="NAD_kinase"/>
    <property type="match status" value="1"/>
</dbReference>
<dbReference type="Pfam" id="PF20143">
    <property type="entry name" value="NAD_kinase_C"/>
    <property type="match status" value="1"/>
</dbReference>
<dbReference type="SUPFAM" id="SSF111331">
    <property type="entry name" value="NAD kinase/diacylglycerol kinase-like"/>
    <property type="match status" value="1"/>
</dbReference>
<name>NADK_SHIBS</name>
<accession>Q31XD1</accession>
<reference key="1">
    <citation type="journal article" date="2005" name="Nucleic Acids Res.">
        <title>Genome dynamics and diversity of Shigella species, the etiologic agents of bacillary dysentery.</title>
        <authorList>
            <person name="Yang F."/>
            <person name="Yang J."/>
            <person name="Zhang X."/>
            <person name="Chen L."/>
            <person name="Jiang Y."/>
            <person name="Yan Y."/>
            <person name="Tang X."/>
            <person name="Wang J."/>
            <person name="Xiong Z."/>
            <person name="Dong J."/>
            <person name="Xue Y."/>
            <person name="Zhu Y."/>
            <person name="Xu X."/>
            <person name="Sun L."/>
            <person name="Chen S."/>
            <person name="Nie H."/>
            <person name="Peng J."/>
            <person name="Xu J."/>
            <person name="Wang Y."/>
            <person name="Yuan Z."/>
            <person name="Wen Y."/>
            <person name="Yao Z."/>
            <person name="Shen Y."/>
            <person name="Qiang B."/>
            <person name="Hou Y."/>
            <person name="Yu J."/>
            <person name="Jin Q."/>
        </authorList>
    </citation>
    <scope>NUCLEOTIDE SEQUENCE [LARGE SCALE GENOMIC DNA]</scope>
    <source>
        <strain>Sb227</strain>
    </source>
</reference>